<name>DNAE2_BRASO</name>
<keyword id="KW-0963">Cytoplasm</keyword>
<keyword id="KW-0227">DNA damage</keyword>
<keyword id="KW-0234">DNA repair</keyword>
<keyword id="KW-0235">DNA replication</keyword>
<keyword id="KW-0239">DNA-directed DNA polymerase</keyword>
<keyword id="KW-0548">Nucleotidyltransferase</keyword>
<keyword id="KW-1185">Reference proteome</keyword>
<keyword id="KW-0808">Transferase</keyword>
<gene>
    <name evidence="1" type="primary">dnaE2</name>
    <name type="ordered locus">BRADO2647</name>
</gene>
<feature type="chain" id="PRO_1000070589" description="Error-prone DNA polymerase">
    <location>
        <begin position="1"/>
        <end position="1170"/>
    </location>
</feature>
<feature type="region of interest" description="Disordered" evidence="2">
    <location>
        <begin position="867"/>
        <end position="899"/>
    </location>
</feature>
<feature type="region of interest" description="Disordered" evidence="2">
    <location>
        <begin position="1129"/>
        <end position="1170"/>
    </location>
</feature>
<feature type="compositionally biased region" description="Basic and acidic residues" evidence="2">
    <location>
        <begin position="886"/>
        <end position="899"/>
    </location>
</feature>
<protein>
    <recommendedName>
        <fullName evidence="1">Error-prone DNA polymerase</fullName>
        <ecNumber evidence="1">2.7.7.7</ecNumber>
    </recommendedName>
</protein>
<proteinExistence type="inferred from homology"/>
<reference key="1">
    <citation type="journal article" date="2007" name="Science">
        <title>Legumes symbioses: absence of nod genes in photosynthetic bradyrhizobia.</title>
        <authorList>
            <person name="Giraud E."/>
            <person name="Moulin L."/>
            <person name="Vallenet D."/>
            <person name="Barbe V."/>
            <person name="Cytryn E."/>
            <person name="Avarre J.-C."/>
            <person name="Jaubert M."/>
            <person name="Simon D."/>
            <person name="Cartieaux F."/>
            <person name="Prin Y."/>
            <person name="Bena G."/>
            <person name="Hannibal L."/>
            <person name="Fardoux J."/>
            <person name="Kojadinovic M."/>
            <person name="Vuillet L."/>
            <person name="Lajus A."/>
            <person name="Cruveiller S."/>
            <person name="Rouy Z."/>
            <person name="Mangenot S."/>
            <person name="Segurens B."/>
            <person name="Dossat C."/>
            <person name="Franck W.L."/>
            <person name="Chang W.-S."/>
            <person name="Saunders E."/>
            <person name="Bruce D."/>
            <person name="Richardson P."/>
            <person name="Normand P."/>
            <person name="Dreyfus B."/>
            <person name="Pignol D."/>
            <person name="Stacey G."/>
            <person name="Emerich D."/>
            <person name="Vermeglio A."/>
            <person name="Medigue C."/>
            <person name="Sadowsky M."/>
        </authorList>
    </citation>
    <scope>NUCLEOTIDE SEQUENCE [LARGE SCALE GENOMIC DNA]</scope>
    <source>
        <strain>ORS 278</strain>
    </source>
</reference>
<dbReference type="EC" id="2.7.7.7" evidence="1"/>
<dbReference type="EMBL" id="CU234118">
    <property type="protein sequence ID" value="CAL76465.1"/>
    <property type="molecule type" value="Genomic_DNA"/>
</dbReference>
<dbReference type="RefSeq" id="WP_011925673.1">
    <property type="nucleotide sequence ID" value="NC_009445.1"/>
</dbReference>
<dbReference type="SMR" id="A4YRD9"/>
<dbReference type="STRING" id="114615.BRADO2647"/>
<dbReference type="KEGG" id="bra:BRADO2647"/>
<dbReference type="eggNOG" id="COG0587">
    <property type="taxonomic scope" value="Bacteria"/>
</dbReference>
<dbReference type="HOGENOM" id="CLU_001600_4_0_5"/>
<dbReference type="OrthoDB" id="9803237at2"/>
<dbReference type="Proteomes" id="UP000001994">
    <property type="component" value="Chromosome"/>
</dbReference>
<dbReference type="GO" id="GO:0005737">
    <property type="term" value="C:cytoplasm"/>
    <property type="evidence" value="ECO:0007669"/>
    <property type="project" value="UniProtKB-SubCell"/>
</dbReference>
<dbReference type="GO" id="GO:0008408">
    <property type="term" value="F:3'-5' exonuclease activity"/>
    <property type="evidence" value="ECO:0007669"/>
    <property type="project" value="InterPro"/>
</dbReference>
<dbReference type="GO" id="GO:0003887">
    <property type="term" value="F:DNA-directed DNA polymerase activity"/>
    <property type="evidence" value="ECO:0007669"/>
    <property type="project" value="UniProtKB-UniRule"/>
</dbReference>
<dbReference type="GO" id="GO:0003676">
    <property type="term" value="F:nucleic acid binding"/>
    <property type="evidence" value="ECO:0007669"/>
    <property type="project" value="InterPro"/>
</dbReference>
<dbReference type="GO" id="GO:0006281">
    <property type="term" value="P:DNA repair"/>
    <property type="evidence" value="ECO:0007669"/>
    <property type="project" value="UniProtKB-UniRule"/>
</dbReference>
<dbReference type="GO" id="GO:0006260">
    <property type="term" value="P:DNA replication"/>
    <property type="evidence" value="ECO:0007669"/>
    <property type="project" value="UniProtKB-KW"/>
</dbReference>
<dbReference type="CDD" id="cd04485">
    <property type="entry name" value="DnaE_OBF"/>
    <property type="match status" value="1"/>
</dbReference>
<dbReference type="CDD" id="cd07434">
    <property type="entry name" value="PHP_PolIIIA_DnaE2"/>
    <property type="match status" value="1"/>
</dbReference>
<dbReference type="Gene3D" id="3.20.20.140">
    <property type="entry name" value="Metal-dependent hydrolases"/>
    <property type="match status" value="1"/>
</dbReference>
<dbReference type="Gene3D" id="2.40.50.140">
    <property type="entry name" value="Nucleic acid-binding proteins"/>
    <property type="match status" value="1"/>
</dbReference>
<dbReference type="HAMAP" id="MF_01902">
    <property type="entry name" value="DNApol_error_prone"/>
    <property type="match status" value="1"/>
</dbReference>
<dbReference type="InterPro" id="IPR011708">
    <property type="entry name" value="DNA_pol3_alpha_NTPase_dom"/>
</dbReference>
<dbReference type="InterPro" id="IPR040982">
    <property type="entry name" value="DNA_pol3_finger"/>
</dbReference>
<dbReference type="InterPro" id="IPR023073">
    <property type="entry name" value="DnaE2"/>
</dbReference>
<dbReference type="InterPro" id="IPR004805">
    <property type="entry name" value="DnaE2/DnaE/PolC"/>
</dbReference>
<dbReference type="InterPro" id="IPR029460">
    <property type="entry name" value="DNAPol_HHH"/>
</dbReference>
<dbReference type="InterPro" id="IPR012340">
    <property type="entry name" value="NA-bd_OB-fold"/>
</dbReference>
<dbReference type="InterPro" id="IPR004365">
    <property type="entry name" value="NA-bd_OB_tRNA"/>
</dbReference>
<dbReference type="InterPro" id="IPR004013">
    <property type="entry name" value="PHP_dom"/>
</dbReference>
<dbReference type="InterPro" id="IPR003141">
    <property type="entry name" value="Pol/His_phosphatase_N"/>
</dbReference>
<dbReference type="InterPro" id="IPR016195">
    <property type="entry name" value="Pol/histidinol_Pase-like"/>
</dbReference>
<dbReference type="NCBIfam" id="TIGR00594">
    <property type="entry name" value="polc"/>
    <property type="match status" value="1"/>
</dbReference>
<dbReference type="NCBIfam" id="NF004225">
    <property type="entry name" value="PRK05672.1"/>
    <property type="match status" value="1"/>
</dbReference>
<dbReference type="PANTHER" id="PTHR32294">
    <property type="entry name" value="DNA POLYMERASE III SUBUNIT ALPHA"/>
    <property type="match status" value="1"/>
</dbReference>
<dbReference type="PANTHER" id="PTHR32294:SF4">
    <property type="entry name" value="ERROR-PRONE DNA POLYMERASE"/>
    <property type="match status" value="1"/>
</dbReference>
<dbReference type="Pfam" id="PF07733">
    <property type="entry name" value="DNA_pol3_alpha"/>
    <property type="match status" value="1"/>
</dbReference>
<dbReference type="Pfam" id="PF17657">
    <property type="entry name" value="DNA_pol3_finger"/>
    <property type="match status" value="1"/>
</dbReference>
<dbReference type="Pfam" id="PF14579">
    <property type="entry name" value="HHH_6"/>
    <property type="match status" value="1"/>
</dbReference>
<dbReference type="Pfam" id="PF02811">
    <property type="entry name" value="PHP"/>
    <property type="match status" value="1"/>
</dbReference>
<dbReference type="Pfam" id="PF01336">
    <property type="entry name" value="tRNA_anti-codon"/>
    <property type="match status" value="1"/>
</dbReference>
<dbReference type="SMART" id="SM00481">
    <property type="entry name" value="POLIIIAc"/>
    <property type="match status" value="1"/>
</dbReference>
<dbReference type="SUPFAM" id="SSF89550">
    <property type="entry name" value="PHP domain-like"/>
    <property type="match status" value="1"/>
</dbReference>
<organism>
    <name type="scientific">Bradyrhizobium sp. (strain ORS 278)</name>
    <dbReference type="NCBI Taxonomy" id="114615"/>
    <lineage>
        <taxon>Bacteria</taxon>
        <taxon>Pseudomonadati</taxon>
        <taxon>Pseudomonadota</taxon>
        <taxon>Alphaproteobacteria</taxon>
        <taxon>Hyphomicrobiales</taxon>
        <taxon>Nitrobacteraceae</taxon>
        <taxon>Bradyrhizobium</taxon>
    </lineage>
</organism>
<evidence type="ECO:0000255" key="1">
    <source>
        <dbReference type="HAMAP-Rule" id="MF_01902"/>
    </source>
</evidence>
<evidence type="ECO:0000256" key="2">
    <source>
        <dbReference type="SAM" id="MobiDB-lite"/>
    </source>
</evidence>
<accession>A4YRD9</accession>
<sequence length="1170" mass="131983">MTPIPYAEIGVTTNFSFLHGGSHPQAYVHQAAEYGLTAIGIADHNTLAGIVRAYSELSNDQLGYRPKLLYGARLVFTCGTPDILVYPRDRAAYGRLCQLLTRGKRGSDLDKVAKGDCRLAFEDLFDFIAGQLLVLMPPHRFDEDALGAILARLKDSPAEGVWLAGSLLYRGDDRRRLARLARLAASAKVPLIATNDVLYHHPQQRMLQDVLTCIREKASIESIGRRLQANAERHLKPGHEMARLFRDHPEAIAETLRFTDRIVFSLDQLKYQYPDEPVPPGKTAQGHLEDLTWAGAKTYFGDKLDDRLRAVLNKELALIAELNYAHYFLTVHDIVRYARSEGILCQGRGSAANSAVCYVLGITSVDPTKIDLLFERFISKERLEPPDIDVDFEHSRREEVMQYVYHRYGRHRAAIIATVIHYRPRSAIRDVGKALGLTEDVTSVLADTVWGSWGDGLSDMQVRQAGLDPHNPMIRRAVELASELITFPRHLSQHVGGYVLTQDRLDSYVPIGNAAMDDRTFIEWDKDDVDALSMMKVDVLALGMLTCIRKSFDLIADHKGRRYVLSDIKSEDDNEVYQMLQRGESLGVFQVESRAQMNMLPRLKPRTFYDLVIEVAIVRPGPIQGDMVHPYLRRRNKLEKVTYPSPSPDHGPSDELYKVLHKTLGVPLFQEQAMRIAIEAAKFSPEEANGLRRAMATFRNVGTIGSYEEKMVSNMIARGYDPAFAKSCFDQIKGFGSYGFPESHAASFAQLVYVSSWLKYFHPDAFCCALLNSQPMGFYAPAQIVGDARKNGVEIRDIDVSHSFADNTLEKTDGEYCAVRLGFRQIDGFRWIDRDEERIRKLSEAVRKEALSVSTRSLPAISPVSFRGARSANPESRDSGFALRAPRNDNDRQIPLHNDDREDDWADRIIRARQRRPFTSLEDFARDTALPKRALLLLADADAFRSLGLDRRAALWAVRRLPDDVPLPLFEAAIAREQPDEGAQPLPEMPLPEHVVADYQTIRLSLKGHPMEFLRRRFAAEGVLACRDVNDTNDRRRIRCAGVVLVRQRPGSAKGVVFMTLEDETGIANIVVWPKVMETFRKEVMGARLVLVEGRIQSSPEKVVHLVAERLVDRTADLTLLSDDRLDAIPHGATPAEPLNDDRRDHTDNPSQRVSHPRNVRILPRSRDFH</sequence>
<comment type="function">
    <text evidence="1">DNA polymerase involved in damage-induced mutagenesis and translesion synthesis (TLS). It is not the major replicative DNA polymerase.</text>
</comment>
<comment type="catalytic activity">
    <reaction evidence="1">
        <text>DNA(n) + a 2'-deoxyribonucleoside 5'-triphosphate = DNA(n+1) + diphosphate</text>
        <dbReference type="Rhea" id="RHEA:22508"/>
        <dbReference type="Rhea" id="RHEA-COMP:17339"/>
        <dbReference type="Rhea" id="RHEA-COMP:17340"/>
        <dbReference type="ChEBI" id="CHEBI:33019"/>
        <dbReference type="ChEBI" id="CHEBI:61560"/>
        <dbReference type="ChEBI" id="CHEBI:173112"/>
        <dbReference type="EC" id="2.7.7.7"/>
    </reaction>
</comment>
<comment type="subcellular location">
    <subcellularLocation>
        <location evidence="1">Cytoplasm</location>
    </subcellularLocation>
</comment>
<comment type="similarity">
    <text evidence="1">Belongs to the DNA polymerase type-C family. DnaE2 subfamily.</text>
</comment>